<keyword id="KW-0963">Cytoplasm</keyword>
<keyword id="KW-0489">Methyltransferase</keyword>
<keyword id="KW-0949">S-adenosyl-L-methionine</keyword>
<keyword id="KW-0808">Transferase</keyword>
<keyword id="KW-0819">tRNA processing</keyword>
<reference key="1">
    <citation type="submission" date="2008-02" db="EMBL/GenBank/DDBJ databases">
        <title>Genome sequence of Ureaplasma parvum serovar 3.</title>
        <authorList>
            <person name="Methe B.A."/>
            <person name="Glass J."/>
            <person name="Waites K."/>
            <person name="Shrivastava S."/>
        </authorList>
    </citation>
    <scope>NUCLEOTIDE SEQUENCE [LARGE SCALE GENOMIC DNA]</scope>
    <source>
        <strain>ATCC 27815 / 27 / NCTC 11736</strain>
    </source>
</reference>
<accession>B1AJK8</accession>
<sequence length="228" mass="26134">MKISILSLFPELYETWIKHSIISNAIKNNQVIIEVIDFRLYTNDKHKKVDDYQYGGGAGMVLRIEPIVAAIRAIRSSNSYVILTTPKGQVFNQELANNFVSKYDHIIIIAGHYEGFDERINYYIDAQYSIGDFVLTGGELPSMVISDAVIRLLDGVISPSSLETESFNNYLLDYPVYTRPLVFEGHKVPDILLSGHHKNIADFRKQQQETITKKNRPDLYQKYLNNKK</sequence>
<evidence type="ECO:0000255" key="1">
    <source>
        <dbReference type="HAMAP-Rule" id="MF_00605"/>
    </source>
</evidence>
<protein>
    <recommendedName>
        <fullName evidence="1">tRNA (guanine-N(1)-)-methyltransferase</fullName>
        <ecNumber evidence="1">2.1.1.228</ecNumber>
    </recommendedName>
    <alternativeName>
        <fullName evidence="1">M1G-methyltransferase</fullName>
    </alternativeName>
    <alternativeName>
        <fullName evidence="1">tRNA [GM37] methyltransferase</fullName>
    </alternativeName>
</protein>
<comment type="function">
    <text evidence="1">Specifically methylates guanosine-37 in various tRNAs.</text>
</comment>
<comment type="catalytic activity">
    <reaction evidence="1">
        <text>guanosine(37) in tRNA + S-adenosyl-L-methionine = N(1)-methylguanosine(37) in tRNA + S-adenosyl-L-homocysteine + H(+)</text>
        <dbReference type="Rhea" id="RHEA:36899"/>
        <dbReference type="Rhea" id="RHEA-COMP:10145"/>
        <dbReference type="Rhea" id="RHEA-COMP:10147"/>
        <dbReference type="ChEBI" id="CHEBI:15378"/>
        <dbReference type="ChEBI" id="CHEBI:57856"/>
        <dbReference type="ChEBI" id="CHEBI:59789"/>
        <dbReference type="ChEBI" id="CHEBI:73542"/>
        <dbReference type="ChEBI" id="CHEBI:74269"/>
        <dbReference type="EC" id="2.1.1.228"/>
    </reaction>
</comment>
<comment type="subunit">
    <text evidence="1">Homodimer.</text>
</comment>
<comment type="subcellular location">
    <subcellularLocation>
        <location evidence="1">Cytoplasm</location>
    </subcellularLocation>
</comment>
<comment type="similarity">
    <text evidence="1">Belongs to the RNA methyltransferase TrmD family.</text>
</comment>
<organism>
    <name type="scientific">Ureaplasma parvum serovar 3 (strain ATCC 27815 / 27 / NCTC 11736)</name>
    <dbReference type="NCBI Taxonomy" id="505682"/>
    <lineage>
        <taxon>Bacteria</taxon>
        <taxon>Bacillati</taxon>
        <taxon>Mycoplasmatota</taxon>
        <taxon>Mycoplasmoidales</taxon>
        <taxon>Mycoplasmoidaceae</taxon>
        <taxon>Ureaplasma</taxon>
    </lineage>
</organism>
<gene>
    <name evidence="1" type="primary">trmD</name>
    <name type="ordered locus">UPA3_0606</name>
</gene>
<feature type="chain" id="PRO_1000082542" description="tRNA (guanine-N(1)-)-methyltransferase">
    <location>
        <begin position="1"/>
        <end position="228"/>
    </location>
</feature>
<feature type="binding site" evidence="1">
    <location>
        <position position="111"/>
    </location>
    <ligand>
        <name>S-adenosyl-L-methionine</name>
        <dbReference type="ChEBI" id="CHEBI:59789"/>
    </ligand>
</feature>
<feature type="binding site" evidence="1">
    <location>
        <begin position="130"/>
        <end position="135"/>
    </location>
    <ligand>
        <name>S-adenosyl-L-methionine</name>
        <dbReference type="ChEBI" id="CHEBI:59789"/>
    </ligand>
</feature>
<dbReference type="EC" id="2.1.1.228" evidence="1"/>
<dbReference type="EMBL" id="CP000942">
    <property type="protein sequence ID" value="ACA33213.1"/>
    <property type="molecule type" value="Genomic_DNA"/>
</dbReference>
<dbReference type="RefSeq" id="WP_006688650.1">
    <property type="nucleotide sequence ID" value="NC_010503.1"/>
</dbReference>
<dbReference type="SMR" id="B1AJK8"/>
<dbReference type="GeneID" id="29672713"/>
<dbReference type="KEGG" id="upa:UPA3_0606"/>
<dbReference type="HOGENOM" id="CLU_047363_0_1_14"/>
<dbReference type="Proteomes" id="UP000002162">
    <property type="component" value="Chromosome"/>
</dbReference>
<dbReference type="GO" id="GO:0005829">
    <property type="term" value="C:cytosol"/>
    <property type="evidence" value="ECO:0007669"/>
    <property type="project" value="TreeGrafter"/>
</dbReference>
<dbReference type="GO" id="GO:0052906">
    <property type="term" value="F:tRNA (guanine(37)-N1)-methyltransferase activity"/>
    <property type="evidence" value="ECO:0007669"/>
    <property type="project" value="UniProtKB-UniRule"/>
</dbReference>
<dbReference type="GO" id="GO:0002939">
    <property type="term" value="P:tRNA N1-guanine methylation"/>
    <property type="evidence" value="ECO:0007669"/>
    <property type="project" value="TreeGrafter"/>
</dbReference>
<dbReference type="CDD" id="cd18080">
    <property type="entry name" value="TrmD-like"/>
    <property type="match status" value="1"/>
</dbReference>
<dbReference type="Gene3D" id="3.40.1280.10">
    <property type="match status" value="1"/>
</dbReference>
<dbReference type="Gene3D" id="1.10.1270.20">
    <property type="entry name" value="tRNA(m1g37)methyltransferase, domain 2"/>
    <property type="match status" value="1"/>
</dbReference>
<dbReference type="HAMAP" id="MF_00605">
    <property type="entry name" value="TrmD"/>
    <property type="match status" value="1"/>
</dbReference>
<dbReference type="InterPro" id="IPR029028">
    <property type="entry name" value="Alpha/beta_knot_MTases"/>
</dbReference>
<dbReference type="InterPro" id="IPR023148">
    <property type="entry name" value="tRNA_m1G_MeTrfase_C_sf"/>
</dbReference>
<dbReference type="InterPro" id="IPR002649">
    <property type="entry name" value="tRNA_m1G_MeTrfase_TrmD"/>
</dbReference>
<dbReference type="InterPro" id="IPR029026">
    <property type="entry name" value="tRNA_m1G_MTases_N"/>
</dbReference>
<dbReference type="InterPro" id="IPR016009">
    <property type="entry name" value="tRNA_MeTrfase_TRMD/TRM10"/>
</dbReference>
<dbReference type="NCBIfam" id="NF000648">
    <property type="entry name" value="PRK00026.1"/>
    <property type="match status" value="1"/>
</dbReference>
<dbReference type="NCBIfam" id="TIGR00088">
    <property type="entry name" value="trmD"/>
    <property type="match status" value="1"/>
</dbReference>
<dbReference type="PANTHER" id="PTHR46417">
    <property type="entry name" value="TRNA (GUANINE-N(1)-)-METHYLTRANSFERASE"/>
    <property type="match status" value="1"/>
</dbReference>
<dbReference type="PANTHER" id="PTHR46417:SF1">
    <property type="entry name" value="TRNA (GUANINE-N(1)-)-METHYLTRANSFERASE"/>
    <property type="match status" value="1"/>
</dbReference>
<dbReference type="Pfam" id="PF01746">
    <property type="entry name" value="tRNA_m1G_MT"/>
    <property type="match status" value="1"/>
</dbReference>
<dbReference type="PIRSF" id="PIRSF000386">
    <property type="entry name" value="tRNA_mtase"/>
    <property type="match status" value="1"/>
</dbReference>
<dbReference type="SUPFAM" id="SSF75217">
    <property type="entry name" value="alpha/beta knot"/>
    <property type="match status" value="1"/>
</dbReference>
<name>TRMD_UREP2</name>
<proteinExistence type="inferred from homology"/>